<keyword id="KW-0002">3D-structure</keyword>
<keyword id="KW-0025">Alternative splicing</keyword>
<keyword id="KW-1003">Cell membrane</keyword>
<keyword id="KW-1015">Disulfide bond</keyword>
<keyword id="KW-0325">Glycoprotein</keyword>
<keyword id="KW-0407">Ion channel</keyword>
<keyword id="KW-0406">Ion transport</keyword>
<keyword id="KW-1071">Ligand-gated ion channel</keyword>
<keyword id="KW-0472">Membrane</keyword>
<keyword id="KW-0597">Phosphoprotein</keyword>
<keyword id="KW-0628">Postsynaptic cell membrane</keyword>
<keyword id="KW-1267">Proteomics identification</keyword>
<keyword id="KW-0675">Receptor</keyword>
<keyword id="KW-1185">Reference proteome</keyword>
<keyword id="KW-0691">RNA editing</keyword>
<keyword id="KW-0732">Signal</keyword>
<keyword id="KW-0770">Synapse</keyword>
<keyword id="KW-0812">Transmembrane</keyword>
<keyword id="KW-1133">Transmembrane helix</keyword>
<keyword id="KW-0813">Transport</keyword>
<evidence type="ECO:0000250" key="1">
    <source>
        <dbReference type="UniProtKB" id="P22756"/>
    </source>
</evidence>
<evidence type="ECO:0000255" key="2"/>
<evidence type="ECO:0000269" key="3">
    <source>
    </source>
</evidence>
<evidence type="ECO:0000269" key="4">
    <source>
    </source>
</evidence>
<evidence type="ECO:0000269" key="5">
    <source>
    </source>
</evidence>
<evidence type="ECO:0000269" key="6">
    <source>
    </source>
</evidence>
<evidence type="ECO:0000269" key="7">
    <source>
    </source>
</evidence>
<evidence type="ECO:0000303" key="8">
    <source>
    </source>
</evidence>
<evidence type="ECO:0000303" key="9">
    <source ref="3"/>
</evidence>
<evidence type="ECO:0000305" key="10"/>
<evidence type="ECO:0007744" key="11">
    <source>
        <dbReference type="PDB" id="2ZNS"/>
    </source>
</evidence>
<evidence type="ECO:0007744" key="12">
    <source>
        <dbReference type="PDB" id="2ZNT"/>
    </source>
</evidence>
<evidence type="ECO:0007744" key="13">
    <source>
        <dbReference type="PDB" id="2ZNU"/>
    </source>
</evidence>
<evidence type="ECO:0007744" key="14">
    <source>
        <dbReference type="PDB" id="3FUZ"/>
    </source>
</evidence>
<evidence type="ECO:0007744" key="15">
    <source>
        <dbReference type="PDB" id="3FV1"/>
    </source>
</evidence>
<evidence type="ECO:0007744" key="16">
    <source>
        <dbReference type="PDB" id="3FV2"/>
    </source>
</evidence>
<evidence type="ECO:0007744" key="17">
    <source>
        <dbReference type="PDB" id="3FVG"/>
    </source>
</evidence>
<evidence type="ECO:0007744" key="18">
    <source>
        <dbReference type="PDB" id="3FVK"/>
    </source>
</evidence>
<evidence type="ECO:0007744" key="19">
    <source>
        <dbReference type="PDB" id="3FVN"/>
    </source>
</evidence>
<evidence type="ECO:0007829" key="20">
    <source>
        <dbReference type="PDB" id="3FV1"/>
    </source>
</evidence>
<comment type="function">
    <text evidence="7">Ionotropic glutamate receptor that functions as a cation-permeable ligand-gated ion channel, gated by L-glutamate and the glutamatergic agonist kainic acid. L-glutamate acts as an excitatory neurotransmitter at many synapses in the central nervous system. Binding of the excitatory neurotransmitter L-glutamate induces a conformation change, leading to the opening of the cation channel, and thereby converts the chemical signal to an electrical impulse. The receptor then desensitizes rapidly and enters a transient inactive state, characterized by the presence of bound agonist.</text>
</comment>
<comment type="function">
    <molecule>Isoform 2</molecule>
    <text evidence="6">Ionotropic glutamate receptor that functions as a cation-permeable ligand-gated ion channel, gated by L-glutamate and the glutamatergic agonist kainic acid.</text>
</comment>
<comment type="catalytic activity">
    <reaction evidence="1">
        <text>Ca(2+)(in) = Ca(2+)(out)</text>
        <dbReference type="Rhea" id="RHEA:29671"/>
        <dbReference type="ChEBI" id="CHEBI:29108"/>
    </reaction>
</comment>
<comment type="subunit">
    <text evidence="1 7">Homotetramer or heterotetramer of pore-forming glutamate receptor subunits. Tetramers may be formed by the dimerization of dimers (By similarity). Can form functional heteromeric receptors with GRIK5 (PubMed:8730589). Can form functional heteromeric receptors with GRIK4 (By similarity). Interacts with KLHL17 (By similarity).</text>
</comment>
<comment type="subcellular location">
    <subcellularLocation>
        <location evidence="1">Cell membrane</location>
        <topology evidence="2">Multi-pass membrane protein</topology>
    </subcellularLocation>
    <subcellularLocation>
        <location evidence="1">Postsynaptic cell membrane</location>
        <topology evidence="2">Multi-pass membrane protein</topology>
    </subcellularLocation>
</comment>
<comment type="alternative products">
    <event type="alternative splicing"/>
    <isoform>
        <id>P39086-1</id>
        <name>1</name>
        <name>GluR5-1D</name>
        <sequence type="displayed"/>
    </isoform>
    <isoform>
        <id>P39086-2</id>
        <name>2</name>
        <name>EAA3A</name>
        <sequence type="described" ref="VSP_000127 VSP_000128"/>
    </isoform>
    <text>Additional isoforms seem to exist.</text>
</comment>
<comment type="RNA editing">
    <location>
        <position position="636" evidence="5"/>
    </location>
    <text evidence="5 7">Partially edited. The unedited version (Q) assembles into a functional kainate-gated homomeric channel, whereas the edited version (R) is unable to produce channel activity when expressed alone.</text>
</comment>
<comment type="miscellaneous">
    <text evidence="6">The postsynaptic actions of Glu are mediated by a variety of receptors that are named according to their selective agonists. This receptor binds domoate &gt; kainate &gt; L-glutamate = quisqualate &gt; CNQX = DNQX &gt; AMPA &gt; dihydrokainate &gt; NMDA.</text>
</comment>
<comment type="similarity">
    <text evidence="10">Belongs to the glutamate-gated ion channel (TC 1.A.10.1) family. GRIK1 subfamily.</text>
</comment>
<sequence length="918" mass="103981">MEHGTLLAQPGLWTRDTSWALLYFLCYILPQTAPQVLRIGGIFETVENEPVNVEELAFKFAVTSINRNRTLMPNTTLTYDIQRINLFDSFEASRRACDQLALGVAALFGPSHSSSVSAVQSICNALEVPHIQTRWKHPSVDNKDLFYINLYPDYAAISRAILDLVLYYNWKTVTVVYEDSTGLIRLQELIKAPSRYNIKIKIRQLPSGNKDAKPLLKEMKKGKEFYVIFDCSHETAAEILKQILFMGMMTEYYHYFFTTLDLFALDLELYRYSGVNMTGFRLLNIDNPHVSSIIEKWSMERLQAPPRPETGLLDGMMTTEAALMYDAVYMVAIASHRASQLTVSSLQCHRHKPWRLGPRFMNLIKEARWDGLTGHITFNKTNGLRKDFDLDIISLKEEGTEKAAGEVSKHLYKVWKKIGIWNSNSGLNMTDSNKDKSSNITDSLANRTLIVTTILEEPYVMYRKSDKPLYGNDRFEGYCLDLLKELSNILGFIYDVKLVPDGKYGAQNDKGEWNGMVKELIDHRADLAVAPLTITYVREKVIDFSKPFMTLGISILYRKPNGTNPGVFSFLNPLSPDIWMYVLLACLGVSCVLFVIARFTPYEWYNPHPCNPDSDVVENNFTLLNSFWFGVGALMQQGSELMPKALSTRIVGGIWWFFTLIIISSYTANLAAFLTVERMESPIDSADDLAKQTKIEYGAVRDGSTMTFFKKSKISTYEKMWAFMSSRQQTALVRNSDEGIQRVLTTDYALLMESTSIEYVTQRNCNLTQIGGLIDSKGYGVGTPIGSPYRDKITIAILQLQEEGKLHMMKEKWWRGNGCPEEDNKEASALGVENIGGIFIVLAAGLVLSVFVAIGEFIYKSRKNNDIEQAFCFFYGLQCKQTHPTNSTSGTTLSTDLECGKLIREERGIRKQSSVHTV</sequence>
<proteinExistence type="evidence at protein level"/>
<organism>
    <name type="scientific">Homo sapiens</name>
    <name type="common">Human</name>
    <dbReference type="NCBI Taxonomy" id="9606"/>
    <lineage>
        <taxon>Eukaryota</taxon>
        <taxon>Metazoa</taxon>
        <taxon>Chordata</taxon>
        <taxon>Craniata</taxon>
        <taxon>Vertebrata</taxon>
        <taxon>Euteleostomi</taxon>
        <taxon>Mammalia</taxon>
        <taxon>Eutheria</taxon>
        <taxon>Euarchontoglires</taxon>
        <taxon>Primates</taxon>
        <taxon>Haplorrhini</taxon>
        <taxon>Catarrhini</taxon>
        <taxon>Hominidae</taxon>
        <taxon>Homo</taxon>
    </lineage>
</organism>
<protein>
    <recommendedName>
        <fullName>Glutamate receptor ionotropic, kainate 1</fullName>
        <shortName>GluK1</shortName>
    </recommendedName>
    <alternativeName>
        <fullName>Excitatory amino acid receptor 3</fullName>
        <shortName>EAA3</shortName>
    </alternativeName>
    <alternativeName>
        <fullName>Glutamate receptor 5</fullName>
        <shortName>GluR-5</shortName>
        <shortName>GluR5</shortName>
    </alternativeName>
</protein>
<feature type="signal peptide" evidence="2">
    <location>
        <begin position="1"/>
        <end position="30"/>
    </location>
</feature>
<feature type="chain" id="PRO_0000011541" description="Glutamate receptor ionotropic, kainate 1">
    <location>
        <begin position="31"/>
        <end position="918"/>
    </location>
</feature>
<feature type="topological domain" description="Extracellular" evidence="2">
    <location>
        <begin position="31"/>
        <end position="576"/>
    </location>
</feature>
<feature type="transmembrane region" description="Helical" evidence="2">
    <location>
        <begin position="577"/>
        <end position="597"/>
    </location>
</feature>
<feature type="topological domain" description="Cytoplasmic" evidence="2">
    <location>
        <begin position="598"/>
        <end position="653"/>
    </location>
</feature>
<feature type="transmembrane region" description="Helical" evidence="2">
    <location>
        <begin position="654"/>
        <end position="674"/>
    </location>
</feature>
<feature type="topological domain" description="Extracellular" evidence="2">
    <location>
        <begin position="675"/>
        <end position="834"/>
    </location>
</feature>
<feature type="transmembrane region" description="Helical" evidence="2">
    <location>
        <begin position="835"/>
        <end position="855"/>
    </location>
</feature>
<feature type="topological domain" description="Cytoplasmic" evidence="2">
    <location>
        <begin position="856"/>
        <end position="918"/>
    </location>
</feature>
<feature type="binding site" evidence="4 11 14">
    <location>
        <position position="531"/>
    </location>
    <ligand>
        <name>L-glutamate</name>
        <dbReference type="ChEBI" id="CHEBI:29985"/>
    </ligand>
</feature>
<feature type="binding site" evidence="4 11 14">
    <location>
        <position position="533"/>
    </location>
    <ligand>
        <name>L-glutamate</name>
        <dbReference type="ChEBI" id="CHEBI:29985"/>
    </ligand>
</feature>
<feature type="binding site" evidence="4 11 14">
    <location>
        <position position="538"/>
    </location>
    <ligand>
        <name>L-glutamate</name>
        <dbReference type="ChEBI" id="CHEBI:29985"/>
    </ligand>
</feature>
<feature type="binding site" evidence="4 11 14">
    <location>
        <position position="704"/>
    </location>
    <ligand>
        <name>L-glutamate</name>
        <dbReference type="ChEBI" id="CHEBI:29985"/>
    </ligand>
</feature>
<feature type="binding site" evidence="4 11 14">
    <location>
        <position position="705"/>
    </location>
    <ligand>
        <name>L-glutamate</name>
        <dbReference type="ChEBI" id="CHEBI:29985"/>
    </ligand>
</feature>
<feature type="binding site" evidence="4 11 14">
    <location>
        <position position="753"/>
    </location>
    <ligand>
        <name>L-glutamate</name>
        <dbReference type="ChEBI" id="CHEBI:29985"/>
    </ligand>
</feature>
<feature type="modified residue" description="Phosphoserine; by PKC" evidence="2">
    <location>
        <position position="725"/>
    </location>
</feature>
<feature type="modified residue" description="Phosphothreonine; by PKC" evidence="2">
    <location>
        <position position="761"/>
    </location>
</feature>
<feature type="glycosylation site" description="N-linked (GlcNAc...) asparagine" evidence="2">
    <location>
        <position position="68"/>
    </location>
</feature>
<feature type="glycosylation site" description="N-linked (GlcNAc...) asparagine" evidence="2">
    <location>
        <position position="74"/>
    </location>
</feature>
<feature type="glycosylation site" description="N-linked (GlcNAc...) asparagine" evidence="2">
    <location>
        <position position="276"/>
    </location>
</feature>
<feature type="glycosylation site" description="N-linked (GlcNAc...) asparagine" evidence="2">
    <location>
        <position position="379"/>
    </location>
</feature>
<feature type="glycosylation site" description="N-linked (GlcNAc...) asparagine" evidence="2">
    <location>
        <position position="428"/>
    </location>
</feature>
<feature type="glycosylation site" description="N-linked (GlcNAc...) asparagine" evidence="2">
    <location>
        <position position="439"/>
    </location>
</feature>
<feature type="glycosylation site" description="N-linked (GlcNAc...) asparagine" evidence="2">
    <location>
        <position position="446"/>
    </location>
</feature>
<feature type="glycosylation site" description="N-linked (GlcNAc...) asparagine" evidence="2">
    <location>
        <position position="561"/>
    </location>
</feature>
<feature type="glycosylation site" description="N-linked (GlcNAc...) asparagine" evidence="2">
    <location>
        <position position="766"/>
    </location>
</feature>
<feature type="disulfide bond" evidence="4">
    <location>
        <begin position="765"/>
        <end position="819"/>
    </location>
</feature>
<feature type="splice variant" id="VSP_000127" description="In isoform 2." evidence="8 9">
    <location>
        <begin position="402"/>
        <end position="416"/>
    </location>
</feature>
<feature type="splice variant" id="VSP_000128" description="In isoform 2." evidence="8 9">
    <original>AFCFFYGLQCKQTHPTNSTSGTTLSTDLECGKLIREERGIRKQSSVHTV</original>
    <variation>CLSFNAIMEELGISLKNQKKIKKKSRTKGKSSFTSILTCHQRRTQRKETVA</variation>
    <location>
        <begin position="870"/>
        <end position="918"/>
    </location>
</feature>
<feature type="sequence variant" id="VAR_012751" description="In dbSNP:rs143252117." evidence="3">
    <original>A</original>
    <variation>V</variation>
    <location>
        <position position="332"/>
    </location>
</feature>
<feature type="sequence variant" id="VAR_000304" description="In RNA edited version.">
    <original>Q</original>
    <variation>R</variation>
    <location>
        <position position="636"/>
    </location>
</feature>
<feature type="sequence variant" id="VAR_012041" description="In dbSNP:rs363494.">
    <original>I</original>
    <variation>V</variation>
    <location>
        <position position="757"/>
    </location>
</feature>
<feature type="sequence variant" id="VAR_012752" description="In dbSNP:rs761410270." evidence="3">
    <original>R</original>
    <variation>Q</variation>
    <location>
        <position position="862"/>
    </location>
</feature>
<feature type="sequence variant" id="VAR_012042" description="In dbSNP:rs363503.">
    <original>A</original>
    <variation>V</variation>
    <location>
        <position position="870"/>
    </location>
</feature>
<feature type="sequence variant" id="VAR_012043" description="In dbSNP:rs363504." evidence="3">
    <original>L</original>
    <variation>S</variation>
    <location>
        <position position="902"/>
    </location>
</feature>
<feature type="sequence conflict" description="In Ref. 2; AAA95961." evidence="10" ref="2">
    <original>R</original>
    <variation>G</variation>
    <location>
        <position position="281"/>
    </location>
</feature>
<feature type="strand" evidence="20">
    <location>
        <begin position="449"/>
        <end position="453"/>
    </location>
</feature>
<feature type="turn" evidence="20">
    <location>
        <begin position="457"/>
        <end position="459"/>
    </location>
</feature>
<feature type="strand" evidence="20">
    <location>
        <begin position="460"/>
        <end position="462"/>
    </location>
</feature>
<feature type="helix" evidence="20">
    <location>
        <begin position="471"/>
        <end position="474"/>
    </location>
</feature>
<feature type="strand" evidence="20">
    <location>
        <begin position="475"/>
        <end position="477"/>
    </location>
</feature>
<feature type="helix" evidence="20">
    <location>
        <begin position="478"/>
        <end position="490"/>
    </location>
</feature>
<feature type="strand" evidence="20">
    <location>
        <begin position="494"/>
        <end position="498"/>
    </location>
</feature>
<feature type="helix" evidence="20">
    <location>
        <begin position="515"/>
        <end position="521"/>
    </location>
</feature>
<feature type="strand" evidence="20">
    <location>
        <begin position="526"/>
        <end position="528"/>
    </location>
</feature>
<feature type="helix" evidence="20">
    <location>
        <begin position="536"/>
        <end position="539"/>
    </location>
</feature>
<feature type="strand" evidence="20">
    <location>
        <begin position="542"/>
        <end position="544"/>
    </location>
</feature>
<feature type="strand" evidence="20">
    <location>
        <begin position="548"/>
        <end position="551"/>
    </location>
</feature>
<feature type="strand" evidence="20">
    <location>
        <begin position="553"/>
        <end position="559"/>
    </location>
</feature>
<feature type="helix" evidence="20">
    <location>
        <begin position="686"/>
        <end position="691"/>
    </location>
</feature>
<feature type="strand" evidence="20">
    <location>
        <begin position="693"/>
        <end position="698"/>
    </location>
</feature>
<feature type="helix" evidence="20">
    <location>
        <begin position="704"/>
        <end position="711"/>
    </location>
</feature>
<feature type="helix" evidence="20">
    <location>
        <begin position="715"/>
        <end position="726"/>
    </location>
</feature>
<feature type="helix" evidence="20">
    <location>
        <begin position="728"/>
        <end position="731"/>
    </location>
</feature>
<feature type="strand" evidence="20">
    <location>
        <begin position="732"/>
        <end position="735"/>
    </location>
</feature>
<feature type="helix" evidence="20">
    <location>
        <begin position="736"/>
        <end position="745"/>
    </location>
</feature>
<feature type="strand" evidence="20">
    <location>
        <begin position="746"/>
        <end position="753"/>
    </location>
</feature>
<feature type="helix" evidence="20">
    <location>
        <begin position="754"/>
        <end position="761"/>
    </location>
</feature>
<feature type="strand" evidence="20">
    <location>
        <begin position="767"/>
        <end position="771"/>
    </location>
</feature>
<feature type="strand" evidence="20">
    <location>
        <begin position="777"/>
        <end position="779"/>
    </location>
</feature>
<feature type="strand" evidence="20">
    <location>
        <begin position="782"/>
        <end position="784"/>
    </location>
</feature>
<feature type="helix" evidence="20">
    <location>
        <begin position="790"/>
        <end position="802"/>
    </location>
</feature>
<feature type="helix" evidence="20">
    <location>
        <begin position="805"/>
        <end position="814"/>
    </location>
</feature>
<reference key="1">
    <citation type="journal article" date="1993" name="NeuroReport">
        <title>Expression and novel subunit isoforms of glutamate receptor genes GluR5 and GluR6.</title>
        <authorList>
            <person name="Gregor P."/>
            <person name="O'Hara B.F."/>
            <person name="Yang X."/>
            <person name="Uhl G.R."/>
        </authorList>
    </citation>
    <scope>NUCLEOTIDE SEQUENCE [MRNA] (ISOFORM 1)</scope>
    <source>
        <tissue>Retina</tissue>
    </source>
</reference>
<reference key="2">
    <citation type="journal article" date="1995" name="Recept. Channels">
        <title>cDNA cloning and functional properties of human glutamate receptor EAA3 (GluR5) in homomeric and heteromeric configuration.</title>
        <authorList>
            <person name="Korczak B."/>
            <person name="Nutt S.L."/>
            <person name="Fletcher E.J."/>
            <person name="Hoo K.H."/>
            <person name="Elliott C.E."/>
            <person name="Rampersad V."/>
            <person name="McWhinnie E.A."/>
            <person name="Kamboj R.K."/>
        </authorList>
    </citation>
    <scope>NUCLEOTIDE SEQUENCE [MRNA] (ISOFORM 2)</scope>
    <scope>FUNCTION</scope>
    <source>
        <tissue>Fetal brain</tissue>
    </source>
</reference>
<reference key="3">
    <citation type="submission" date="1999-09" db="EMBL/GenBank/DDBJ databases">
        <title>Myeloid progenitor cell growth and apoptosis involves known and cell-specific ionotropic glutamate receptors.</title>
        <authorList>
            <person name="Langer A."/>
            <person name="Xu D."/>
            <person name="Kuehcke K."/>
            <person name="Fehse B."/>
            <person name="Abdallah S."/>
            <person name="Lother H."/>
        </authorList>
    </citation>
    <scope>NUCLEOTIDE SEQUENCE [MRNA] (ISOFORM 2)</scope>
    <source>
        <tissue>Erythroleukemia</tissue>
    </source>
</reference>
<reference key="4">
    <citation type="journal article" date="1994" name="NeuroReport">
        <title>RNA editing of human kainate receptor subunits.</title>
        <authorList>
            <person name="Nutt S.L."/>
            <person name="Kamboj R.K."/>
        </authorList>
    </citation>
    <scope>RNA EDITING OF POSITION 636</scope>
    <source>
        <tissue>Brain</tissue>
    </source>
</reference>
<reference key="5">
    <citation type="journal article" date="1996" name="J. Physiol. (Lond.)">
        <title>Effect of RNA editing and subunit co-assembly single-channel properties of recombinant kainate receptors.</title>
        <authorList>
            <person name="Swanson G.T."/>
            <person name="Feldmeyer D."/>
            <person name="Kaneda M."/>
            <person name="Cull-Candy S.G."/>
        </authorList>
    </citation>
    <scope>FUNCTION</scope>
    <scope>SUBUNIT</scope>
    <scope>RNA EDITING</scope>
</reference>
<reference evidence="11 12 13 14 15 16 17 18 19" key="6">
    <citation type="journal article" date="2011" name="J. Mol. Biol.">
        <title>Binding and selectivity of the marine toxin neodysiherbaine A and its synthetic analogues to GluK1 and GluK2 kainate receptors.</title>
        <authorList>
            <person name="Unno M."/>
            <person name="Shinohara M."/>
            <person name="Takayama K."/>
            <person name="Tanaka H."/>
            <person name="Teruya K."/>
            <person name="Doh-ura K."/>
            <person name="Sakai R."/>
            <person name="Sasaki M."/>
            <person name="Ikeda-Saito M."/>
        </authorList>
    </citation>
    <scope>X-RAY CRYSTALLOGRAPHY (1.50 ANGSTROMS) OF 445-559 AND 682-820 IN COMPLEX WITH L-GLUTAMATE</scope>
    <scope>DISULFIDE BOND</scope>
</reference>
<reference key="7">
    <citation type="journal article" date="2001" name="Psychiatr. Genet.">
        <title>Association study of polymorphisms in the GluR5 kainate receptor gene (GRIK1) with schizophrenia.</title>
        <authorList>
            <person name="Shibata H."/>
            <person name="Joo A."/>
            <person name="Fujii Y."/>
            <person name="Tani A."/>
            <person name="Makino C."/>
            <person name="Hirata N."/>
            <person name="Kikuta R."/>
            <person name="Ninomiya H."/>
            <person name="Tashiro N."/>
            <person name="Fukumaki Y."/>
        </authorList>
    </citation>
    <scope>VARIANTS VAL-332; GLN-862 AND SER-902</scope>
</reference>
<dbReference type="EMBL" id="L19058">
    <property type="protein sequence ID" value="AAA52568.1"/>
    <property type="molecule type" value="mRNA"/>
</dbReference>
<dbReference type="EMBL" id="U16125">
    <property type="protein sequence ID" value="AAA95961.1"/>
    <property type="molecule type" value="mRNA"/>
</dbReference>
<dbReference type="EMBL" id="AJ249208">
    <property type="protein sequence ID" value="CAC80546.1"/>
    <property type="molecule type" value="mRNA"/>
</dbReference>
<dbReference type="CCDS" id="CCDS33530.1">
    <molecule id="P39086-2"/>
</dbReference>
<dbReference type="CCDS" id="CCDS42913.1">
    <molecule id="P39086-1"/>
</dbReference>
<dbReference type="PIR" id="I58178">
    <property type="entry name" value="I58178"/>
</dbReference>
<dbReference type="RefSeq" id="NP_000821.1">
    <molecule id="P39086-1"/>
    <property type="nucleotide sequence ID" value="NM_000830.6"/>
</dbReference>
<dbReference type="RefSeq" id="NP_001307545.1">
    <property type="nucleotide sequence ID" value="NM_001320616.1"/>
</dbReference>
<dbReference type="RefSeq" id="NP_001307547.1">
    <property type="nucleotide sequence ID" value="NM_001320618.1"/>
</dbReference>
<dbReference type="RefSeq" id="NP_783300.1">
    <molecule id="P39086-2"/>
    <property type="nucleotide sequence ID" value="NM_175611.3"/>
</dbReference>
<dbReference type="PDB" id="2ZNS">
    <property type="method" value="X-ray"/>
    <property type="resolution" value="2.00 A"/>
    <property type="chains" value="A=445-559, A=682-820"/>
</dbReference>
<dbReference type="PDB" id="2ZNT">
    <property type="method" value="X-ray"/>
    <property type="resolution" value="1.60 A"/>
    <property type="chains" value="A=445-559, A=682-820"/>
</dbReference>
<dbReference type="PDB" id="2ZNU">
    <property type="method" value="X-ray"/>
    <property type="resolution" value="1.80 A"/>
    <property type="chains" value="A=445-559, A=682-820"/>
</dbReference>
<dbReference type="PDB" id="3FUZ">
    <property type="method" value="X-ray"/>
    <property type="resolution" value="1.65 A"/>
    <property type="chains" value="A/B=445-559, A/B=682-820"/>
</dbReference>
<dbReference type="PDB" id="3FV1">
    <property type="method" value="X-ray"/>
    <property type="resolution" value="1.50 A"/>
    <property type="chains" value="A/B=445-559, A/B=682-820"/>
</dbReference>
<dbReference type="PDB" id="3FV2">
    <property type="method" value="X-ray"/>
    <property type="resolution" value="1.50 A"/>
    <property type="chains" value="A/B=445-559, A/B=682-820"/>
</dbReference>
<dbReference type="PDB" id="3FVG">
    <property type="method" value="X-ray"/>
    <property type="resolution" value="1.50 A"/>
    <property type="chains" value="A/B=445-559, A/B=682-820"/>
</dbReference>
<dbReference type="PDB" id="3FVK">
    <property type="method" value="X-ray"/>
    <property type="resolution" value="1.50 A"/>
    <property type="chains" value="A/B=445-559, A/B=682-820"/>
</dbReference>
<dbReference type="PDB" id="3FVN">
    <property type="method" value="X-ray"/>
    <property type="resolution" value="1.50 A"/>
    <property type="chains" value="A/B=445-559, A/B=682-820"/>
</dbReference>
<dbReference type="PDB" id="3FVO">
    <property type="method" value="X-ray"/>
    <property type="resolution" value="1.50 A"/>
    <property type="chains" value="A/B=445-559, A/B=682-820"/>
</dbReference>
<dbReference type="PDB" id="4MF3">
    <property type="method" value="X-ray"/>
    <property type="resolution" value="3.00 A"/>
    <property type="chains" value="A/B=443-559, A/B=682-822"/>
</dbReference>
<dbReference type="PDBsum" id="2ZNS"/>
<dbReference type="PDBsum" id="2ZNT"/>
<dbReference type="PDBsum" id="2ZNU"/>
<dbReference type="PDBsum" id="3FUZ"/>
<dbReference type="PDBsum" id="3FV1"/>
<dbReference type="PDBsum" id="3FV2"/>
<dbReference type="PDBsum" id="3FVG"/>
<dbReference type="PDBsum" id="3FVK"/>
<dbReference type="PDBsum" id="3FVN"/>
<dbReference type="PDBsum" id="3FVO"/>
<dbReference type="PDBsum" id="4MF3"/>
<dbReference type="SMR" id="P39086"/>
<dbReference type="BioGRID" id="109154">
    <property type="interactions" value="33"/>
</dbReference>
<dbReference type="ComplexPortal" id="CPX-8522">
    <property type="entry name" value="GLUK1-GLUK5 glutamate ionotropic kainate-type receptor complex"/>
</dbReference>
<dbReference type="ComplexPortal" id="CPX-8523">
    <property type="entry name" value="GluK1 glutamate ionotropic kainate-type receptor complex"/>
</dbReference>
<dbReference type="ComplexPortal" id="CPX-8525">
    <property type="entry name" value="GLUK1-GLUK2-GLUK5 glutamate ionotropic kainate-type receptor complex"/>
</dbReference>
<dbReference type="ComplexPortal" id="CPX-8545">
    <property type="entry name" value="GLUK1-GLUK2 glutamate ionotropic kainate-type receptor complex"/>
</dbReference>
<dbReference type="ComplexPortal" id="CPX-8550">
    <property type="entry name" value="GLUK1-GLUK3 glutamate ionotropic kainate-type receptor complex"/>
</dbReference>
<dbReference type="ComplexPortal" id="CPX-8555">
    <property type="entry name" value="GLUK1-GLUK3-GLUK5 glutamate ionotropic kainate-type receptor complex"/>
</dbReference>
<dbReference type="ComplexPortal" id="CPX-8556">
    <property type="entry name" value="GLUK1-GLUK2-GLUK3-GLUK5 glutamate ionotropic kainate-type receptor complex"/>
</dbReference>
<dbReference type="ComplexPortal" id="CPX-8629">
    <property type="entry name" value="GLUK1-GLUK4 glutamate ionotropic kainate-type receptor complex"/>
</dbReference>
<dbReference type="ComplexPortal" id="CPX-8632">
    <property type="entry name" value="GLUK1-GLUK2-GLUK4 glutamate ionotropic kainate-type receptor complex"/>
</dbReference>
<dbReference type="ComplexPortal" id="CPX-8633">
    <property type="entry name" value="GLUK1-GLUK3-GLUK4 glutamate ionotropic kainate-type receptor complex"/>
</dbReference>
<dbReference type="ComplexPortal" id="CPX-8634">
    <property type="entry name" value="GLUK1-GLUK2-GLUK3-GLUK4 glutamate ionotropic kainate-type receptor complex"/>
</dbReference>
<dbReference type="CORUM" id="P39086"/>
<dbReference type="FunCoup" id="P39086">
    <property type="interactions" value="782"/>
</dbReference>
<dbReference type="IntAct" id="P39086">
    <property type="interactions" value="22"/>
</dbReference>
<dbReference type="MINT" id="P39086"/>
<dbReference type="STRING" id="9606.ENSP00000327687"/>
<dbReference type="BindingDB" id="P39086"/>
<dbReference type="ChEMBL" id="CHEMBL1918"/>
<dbReference type="DrugBank" id="DB04152">
    <property type="generic name" value="2-Amino-3-(3-Hydroxy-7,8-Dihydro-6h-Cyclohepta[D]-4-Isoxazolyl)Propionic Acid"/>
</dbReference>
<dbReference type="DrugBank" id="DB02347">
    <property type="generic name" value="2-Amino-3-(5-Tert-Butyl-3-(Phosphonomethoxy)-4-Isoxazolyl)Propionic Acid"/>
</dbReference>
<dbReference type="DrugBank" id="DB00237">
    <property type="generic name" value="Butabarbital"/>
</dbReference>
<dbReference type="DrugBank" id="DB02852">
    <property type="generic name" value="Domoic Acid"/>
</dbReference>
<dbReference type="DrugBank" id="DB03759">
    <property type="generic name" value="FG-9041"/>
</dbReference>
<dbReference type="DrugBank" id="DB00142">
    <property type="generic name" value="Glutamic acid"/>
</dbReference>
<dbReference type="DrugBank" id="DB02818">
    <property type="generic name" value="Iodo-Willardiine"/>
</dbReference>
<dbReference type="DrugBank" id="DB02999">
    <property type="generic name" value="Quisqualic acid"/>
</dbReference>
<dbReference type="DrugBank" id="DB06354">
    <property type="generic name" value="Tezampanel"/>
</dbReference>
<dbReference type="DrugBank" id="DB00273">
    <property type="generic name" value="Topiramate"/>
</dbReference>
<dbReference type="DrugCentral" id="P39086"/>
<dbReference type="GuidetoPHARMACOLOGY" id="450"/>
<dbReference type="GlyCosmos" id="P39086">
    <property type="glycosylation" value="9 sites, No reported glycans"/>
</dbReference>
<dbReference type="GlyGen" id="P39086">
    <property type="glycosylation" value="9 sites"/>
</dbReference>
<dbReference type="iPTMnet" id="P39086"/>
<dbReference type="PhosphoSitePlus" id="P39086"/>
<dbReference type="BioMuta" id="GRIK1"/>
<dbReference type="DMDM" id="729597"/>
<dbReference type="jPOST" id="P39086"/>
<dbReference type="MassIVE" id="P39086"/>
<dbReference type="PaxDb" id="9606-ENSP00000382791"/>
<dbReference type="PeptideAtlas" id="P39086"/>
<dbReference type="ProteomicsDB" id="55314">
    <molecule id="P39086-1"/>
</dbReference>
<dbReference type="ProteomicsDB" id="55315">
    <molecule id="P39086-2"/>
</dbReference>
<dbReference type="Antibodypedia" id="22450">
    <property type="antibodies" value="292 antibodies from 36 providers"/>
</dbReference>
<dbReference type="DNASU" id="2897"/>
<dbReference type="Ensembl" id="ENST00000389125.7">
    <molecule id="P39086-2"/>
    <property type="protein sequence ID" value="ENSP00000373777.3"/>
    <property type="gene ID" value="ENSG00000171189.18"/>
</dbReference>
<dbReference type="Ensembl" id="ENST00000399907.6">
    <molecule id="P39086-1"/>
    <property type="protein sequence ID" value="ENSP00000382791.1"/>
    <property type="gene ID" value="ENSG00000171189.18"/>
</dbReference>
<dbReference type="GeneID" id="2897"/>
<dbReference type="KEGG" id="hsa:2897"/>
<dbReference type="UCSC" id="uc002ynn.4">
    <molecule id="P39086-1"/>
    <property type="organism name" value="human"/>
</dbReference>
<dbReference type="AGR" id="HGNC:4579"/>
<dbReference type="CTD" id="2897"/>
<dbReference type="DisGeNET" id="2897"/>
<dbReference type="GeneCards" id="GRIK1"/>
<dbReference type="HGNC" id="HGNC:4579">
    <property type="gene designation" value="GRIK1"/>
</dbReference>
<dbReference type="HPA" id="ENSG00000171189">
    <property type="expression patterns" value="Group enriched (adrenal gland, brain, retina)"/>
</dbReference>
<dbReference type="MIM" id="138245">
    <property type="type" value="gene"/>
</dbReference>
<dbReference type="neXtProt" id="NX_P39086"/>
<dbReference type="OpenTargets" id="ENSG00000171189"/>
<dbReference type="PharmGKB" id="PA28973"/>
<dbReference type="VEuPathDB" id="HostDB:ENSG00000171189"/>
<dbReference type="eggNOG" id="KOG1052">
    <property type="taxonomic scope" value="Eukaryota"/>
</dbReference>
<dbReference type="GeneTree" id="ENSGT00940000156253"/>
<dbReference type="HOGENOM" id="CLU_007257_1_2_1"/>
<dbReference type="InParanoid" id="P39086"/>
<dbReference type="OMA" id="FMQCEIN"/>
<dbReference type="OrthoDB" id="5984008at2759"/>
<dbReference type="PAN-GO" id="P39086">
    <property type="GO annotations" value="6 GO annotations based on evolutionary models"/>
</dbReference>
<dbReference type="PhylomeDB" id="P39086"/>
<dbReference type="TreeFam" id="TF334668"/>
<dbReference type="PathwayCommons" id="P39086"/>
<dbReference type="Reactome" id="R-HSA-451307">
    <property type="pathway name" value="Activation of Na-permeable kainate receptors"/>
</dbReference>
<dbReference type="Reactome" id="R-HSA-451308">
    <property type="pathway name" value="Activation of Ca-permeable Kainate Receptor"/>
</dbReference>
<dbReference type="SignaLink" id="P39086"/>
<dbReference type="SIGNOR" id="P39086"/>
<dbReference type="BioGRID-ORCS" id="2897">
    <property type="hits" value="17 hits in 1149 CRISPR screens"/>
</dbReference>
<dbReference type="ChiTaRS" id="GRIK1">
    <property type="organism name" value="human"/>
</dbReference>
<dbReference type="EvolutionaryTrace" id="P39086"/>
<dbReference type="GeneWiki" id="GRIK1"/>
<dbReference type="GenomeRNAi" id="2897"/>
<dbReference type="Pharos" id="P39086">
    <property type="development level" value="Tclin"/>
</dbReference>
<dbReference type="PRO" id="PR:P39086"/>
<dbReference type="Proteomes" id="UP000005640">
    <property type="component" value="Chromosome 21"/>
</dbReference>
<dbReference type="RNAct" id="P39086">
    <property type="molecule type" value="protein"/>
</dbReference>
<dbReference type="Bgee" id="ENSG00000171189">
    <property type="expression patterns" value="Expressed in male germ line stem cell (sensu Vertebrata) in testis and 134 other cell types or tissues"/>
</dbReference>
<dbReference type="ExpressionAtlas" id="P39086">
    <property type="expression patterns" value="baseline and differential"/>
</dbReference>
<dbReference type="GO" id="GO:0043231">
    <property type="term" value="C:intracellular membrane-bounded organelle"/>
    <property type="evidence" value="ECO:0000314"/>
    <property type="project" value="HPA"/>
</dbReference>
<dbReference type="GO" id="GO:0032983">
    <property type="term" value="C:kainate selective glutamate receptor complex"/>
    <property type="evidence" value="ECO:0000318"/>
    <property type="project" value="GO_Central"/>
</dbReference>
<dbReference type="GO" id="GO:0005886">
    <property type="term" value="C:plasma membrane"/>
    <property type="evidence" value="ECO:0000314"/>
    <property type="project" value="HPA"/>
</dbReference>
<dbReference type="GO" id="GO:0098839">
    <property type="term" value="C:postsynaptic density membrane"/>
    <property type="evidence" value="ECO:0000318"/>
    <property type="project" value="GO_Central"/>
</dbReference>
<dbReference type="GO" id="GO:0042734">
    <property type="term" value="C:presynaptic membrane"/>
    <property type="evidence" value="ECO:0000318"/>
    <property type="project" value="GO_Central"/>
</dbReference>
<dbReference type="GO" id="GO:0022849">
    <property type="term" value="F:glutamate-gated calcium ion channel activity"/>
    <property type="evidence" value="ECO:0000250"/>
    <property type="project" value="UniProtKB"/>
</dbReference>
<dbReference type="GO" id="GO:0004970">
    <property type="term" value="F:glutamate-gated receptor activity"/>
    <property type="evidence" value="ECO:0000314"/>
    <property type="project" value="UniProtKB"/>
</dbReference>
<dbReference type="GO" id="GO:0015277">
    <property type="term" value="F:kainate selective glutamate receptor activity"/>
    <property type="evidence" value="ECO:0000314"/>
    <property type="project" value="UniProtKB"/>
</dbReference>
<dbReference type="GO" id="GO:1904315">
    <property type="term" value="F:transmitter-gated monoatomic ion channel activity involved in regulation of postsynaptic membrane potential"/>
    <property type="evidence" value="ECO:0000318"/>
    <property type="project" value="GO_Central"/>
</dbReference>
<dbReference type="GO" id="GO:0007417">
    <property type="term" value="P:central nervous system development"/>
    <property type="evidence" value="ECO:0000304"/>
    <property type="project" value="ProtInc"/>
</dbReference>
<dbReference type="GO" id="GO:0007268">
    <property type="term" value="P:chemical synaptic transmission"/>
    <property type="evidence" value="ECO:0000304"/>
    <property type="project" value="ProtInc"/>
</dbReference>
<dbReference type="GO" id="GO:0007215">
    <property type="term" value="P:glutamate receptor signaling pathway"/>
    <property type="evidence" value="ECO:0000304"/>
    <property type="project" value="ProtInc"/>
</dbReference>
<dbReference type="GO" id="GO:0050804">
    <property type="term" value="P:modulation of chemical synaptic transmission"/>
    <property type="evidence" value="ECO:0000318"/>
    <property type="project" value="GO_Central"/>
</dbReference>
<dbReference type="GO" id="GO:0007399">
    <property type="term" value="P:nervous system development"/>
    <property type="evidence" value="ECO:0000304"/>
    <property type="project" value="ProtInc"/>
</dbReference>
<dbReference type="GO" id="GO:0051966">
    <property type="term" value="P:regulation of synaptic transmission, glutamatergic"/>
    <property type="evidence" value="ECO:0000304"/>
    <property type="project" value="UniProtKB"/>
</dbReference>
<dbReference type="GO" id="GO:0035249">
    <property type="term" value="P:synaptic transmission, glutamatergic"/>
    <property type="evidence" value="ECO:0000318"/>
    <property type="project" value="GO_Central"/>
</dbReference>
<dbReference type="CDD" id="cd06382">
    <property type="entry name" value="PBP1_iGluR_Kainate"/>
    <property type="match status" value="1"/>
</dbReference>
<dbReference type="FunFam" id="3.40.50.2300:FF:000010">
    <property type="entry name" value="Glutamate ionotropic receptor kainate type subunit 1"/>
    <property type="match status" value="1"/>
</dbReference>
<dbReference type="FunFam" id="3.40.190.10:FF:000210">
    <property type="entry name" value="Glutamate receptor ionotropic, kainate 1"/>
    <property type="match status" value="1"/>
</dbReference>
<dbReference type="FunFam" id="3.40.190.10:FF:000240">
    <property type="entry name" value="Glutamate receptor ionotropic, kainate 2"/>
    <property type="match status" value="1"/>
</dbReference>
<dbReference type="FunFam" id="1.10.287.70:FF:000010">
    <property type="entry name" value="Putative glutamate receptor ionotropic kainate 1"/>
    <property type="match status" value="1"/>
</dbReference>
<dbReference type="Gene3D" id="1.10.287.70">
    <property type="match status" value="1"/>
</dbReference>
<dbReference type="Gene3D" id="3.40.50.2300">
    <property type="match status" value="2"/>
</dbReference>
<dbReference type="Gene3D" id="3.40.190.10">
    <property type="entry name" value="Periplasmic binding protein-like II"/>
    <property type="match status" value="1"/>
</dbReference>
<dbReference type="InterPro" id="IPR001828">
    <property type="entry name" value="ANF_lig-bd_rcpt"/>
</dbReference>
<dbReference type="InterPro" id="IPR019594">
    <property type="entry name" value="Glu/Gly-bd"/>
</dbReference>
<dbReference type="InterPro" id="IPR001508">
    <property type="entry name" value="Iono_Glu_rcpt_met"/>
</dbReference>
<dbReference type="InterPro" id="IPR015683">
    <property type="entry name" value="Ionotropic_Glu_rcpt"/>
</dbReference>
<dbReference type="InterPro" id="IPR001320">
    <property type="entry name" value="Iontro_rcpt_C"/>
</dbReference>
<dbReference type="InterPro" id="IPR028082">
    <property type="entry name" value="Peripla_BP_I"/>
</dbReference>
<dbReference type="PANTHER" id="PTHR18966">
    <property type="entry name" value="IONOTROPIC GLUTAMATE RECEPTOR"/>
    <property type="match status" value="1"/>
</dbReference>
<dbReference type="Pfam" id="PF01094">
    <property type="entry name" value="ANF_receptor"/>
    <property type="match status" value="1"/>
</dbReference>
<dbReference type="Pfam" id="PF00060">
    <property type="entry name" value="Lig_chan"/>
    <property type="match status" value="1"/>
</dbReference>
<dbReference type="Pfam" id="PF10613">
    <property type="entry name" value="Lig_chan-Glu_bd"/>
    <property type="match status" value="1"/>
</dbReference>
<dbReference type="PRINTS" id="PR00177">
    <property type="entry name" value="NMDARECEPTOR"/>
</dbReference>
<dbReference type="SMART" id="SM00918">
    <property type="entry name" value="Lig_chan-Glu_bd"/>
    <property type="match status" value="1"/>
</dbReference>
<dbReference type="SMART" id="SM00079">
    <property type="entry name" value="PBPe"/>
    <property type="match status" value="1"/>
</dbReference>
<dbReference type="SUPFAM" id="SSF53822">
    <property type="entry name" value="Periplasmic binding protein-like I"/>
    <property type="match status" value="1"/>
</dbReference>
<dbReference type="SUPFAM" id="SSF53850">
    <property type="entry name" value="Periplasmic binding protein-like II"/>
    <property type="match status" value="1"/>
</dbReference>
<accession>P39086</accession>
<accession>Q13001</accession>
<accession>Q86SU9</accession>
<name>GRIK1_HUMAN</name>
<gene>
    <name type="primary">GRIK1</name>
    <name type="synonym">GLUR5</name>
</gene>